<accession>Q3U6Q4</accession>
<accession>Q3TBT5</accession>
<accession>Q3UAY4</accession>
<accession>Q8K323</accession>
<comment type="function">
    <text evidence="3 4 5">Regulatory subunit of the PI3K gamma complex. Acts as an adapter to drive activation of PIK3CG by beta-gamma G protein dimers. The PIK3CG:PIK3R6 heterodimer is much less sensitive to beta-gamma G proteins than PIK3CG:PIK3R5 and its membrane recruitment and beta-gamma G protein dimer-dependent activation requires HRAS bound to PIK3CG. Recruits of the PI3K gamma complex to a PDE3B:RAPGEF3 signaling complex involved in angiogenesis; signaling seems to involve RRAS.</text>
</comment>
<comment type="subunit">
    <text evidence="1 3 4">Heterodimer of a catalytic subunit (PIK3CG) and a regulatory (PIK3R6) subunit. The binding of PIK3R6 to PIK3CG may exclude the binding of PIK3R5 to PIK3CG (PubMed:15797027, PubMed:16476736). Interacts with beta-gamma G protein dimers (PubMed:16476736). Interacts with PDE3B and RAPGEF3; form a signaling complex that regulates phosphatidylinositol 3-kinase gamma in angiogenesis (By similarity).</text>
</comment>
<comment type="interaction">
    <interactant intactId="EBI-4303950">
        <id>Q3U6Q4</id>
    </interactant>
    <interactant intactId="EBI-644372">
        <id>Q9JHG7</id>
        <label>Pik3cg</label>
    </interactant>
    <organismsDiffer>false</organismsDiffer>
    <experiments>4</experiments>
</comment>
<comment type="interaction">
    <interactant intactId="EBI-4303950">
        <id>Q3U6Q4</id>
    </interactant>
    <interactant intactId="EBI-1030384">
        <id>P48736</id>
        <label>PIK3CG</label>
    </interactant>
    <organismsDiffer>true</organismsDiffer>
    <experiments>6</experiments>
</comment>
<comment type="subcellular location">
    <subcellularLocation>
        <location evidence="4">Cytoplasm</location>
    </subcellularLocation>
    <subcellularLocation>
        <location evidence="5">Cell membrane</location>
        <topology evidence="5">Peripheral membrane protein</topology>
    </subcellularLocation>
    <text evidence="5">Translocated to the plasma membrane in a Ras-dependent manner (PubMed:19906996).</text>
</comment>
<comment type="alternative products">
    <event type="alternative splicing"/>
    <isoform>
        <id>Q3U6Q4-1</id>
        <name>1</name>
        <sequence type="displayed"/>
    </isoform>
    <isoform>
        <id>Q3U6Q4-2</id>
        <name>2</name>
        <sequence type="described" ref="VSP_018257"/>
    </isoform>
    <isoform>
        <id>Q3U6Q4-3</id>
        <name>3</name>
        <sequence type="described" ref="VSP_018255 VSP_018256"/>
    </isoform>
</comment>
<comment type="tissue specificity">
    <text evidence="4">Highly expressed in heart. In a lower extent, also expressed in brain, spleen, lung, liver, kidney, prostate, thyroid, salivary gland, dendritic cells, macrophages and neutrophils.</text>
</comment>
<dbReference type="EMBL" id="AY753194">
    <property type="protein sequence ID" value="AAV30089.1"/>
    <property type="molecule type" value="mRNA"/>
</dbReference>
<dbReference type="EMBL" id="DQ295832">
    <property type="protein sequence ID" value="ABB97395.1"/>
    <property type="molecule type" value="mRNA"/>
</dbReference>
<dbReference type="EMBL" id="AK151178">
    <property type="protein sequence ID" value="BAE30180.1"/>
    <property type="molecule type" value="mRNA"/>
</dbReference>
<dbReference type="EMBL" id="AK153039">
    <property type="protein sequence ID" value="BAE31670.1"/>
    <property type="molecule type" value="mRNA"/>
</dbReference>
<dbReference type="EMBL" id="AK171063">
    <property type="protein sequence ID" value="BAE42222.1"/>
    <property type="molecule type" value="mRNA"/>
</dbReference>
<dbReference type="EMBL" id="BC028998">
    <property type="protein sequence ID" value="AAH28998.1"/>
    <property type="molecule type" value="mRNA"/>
</dbReference>
<dbReference type="EMBL" id="AL606831">
    <property type="status" value="NOT_ANNOTATED_CDS"/>
    <property type="molecule type" value="Genomic_DNA"/>
</dbReference>
<dbReference type="CCDS" id="CCDS24866.1">
    <molecule id="Q3U6Q4-2"/>
</dbReference>
<dbReference type="CCDS" id="CCDS36186.1">
    <molecule id="Q3U6Q4-1"/>
</dbReference>
<dbReference type="RefSeq" id="NP_001004435.1">
    <molecule id="Q3U6Q4-2"/>
    <property type="nucleotide sequence ID" value="NM_001004435.3"/>
</dbReference>
<dbReference type="RefSeq" id="NP_001075035.1">
    <molecule id="Q3U6Q4-1"/>
    <property type="nucleotide sequence ID" value="NM_001081566.2"/>
</dbReference>
<dbReference type="PDB" id="8AJ8">
    <property type="method" value="X-ray"/>
    <property type="resolution" value="8.50 A"/>
    <property type="chains" value="B/D/F/H=1-756"/>
</dbReference>
<dbReference type="PDBsum" id="8AJ8"/>
<dbReference type="SMR" id="Q3U6Q4"/>
<dbReference type="CORUM" id="Q3U6Q4"/>
<dbReference type="DIP" id="DIP-60179N"/>
<dbReference type="FunCoup" id="Q3U6Q4">
    <property type="interactions" value="718"/>
</dbReference>
<dbReference type="IntAct" id="Q3U6Q4">
    <property type="interactions" value="4"/>
</dbReference>
<dbReference type="STRING" id="10090.ENSMUSP00000052522"/>
<dbReference type="iPTMnet" id="Q3U6Q4"/>
<dbReference type="PhosphoSitePlus" id="Q3U6Q4"/>
<dbReference type="SwissPalm" id="Q3U6Q4"/>
<dbReference type="PaxDb" id="10090-ENSMUSP00000099673"/>
<dbReference type="ProteomicsDB" id="289560">
    <molecule id="Q3U6Q4-1"/>
</dbReference>
<dbReference type="ProteomicsDB" id="289561">
    <molecule id="Q3U6Q4-2"/>
</dbReference>
<dbReference type="ProteomicsDB" id="289562">
    <molecule id="Q3U6Q4-3"/>
</dbReference>
<dbReference type="Antibodypedia" id="74162">
    <property type="antibodies" value="103 antibodies from 27 providers"/>
</dbReference>
<dbReference type="DNASU" id="104709"/>
<dbReference type="Ensembl" id="ENSMUST00000060441.7">
    <molecule id="Q3U6Q4-1"/>
    <property type="protein sequence ID" value="ENSMUSP00000052522.7"/>
    <property type="gene ID" value="ENSMUSG00000046207.15"/>
</dbReference>
<dbReference type="Ensembl" id="ENSMUST00000102613.8">
    <molecule id="Q3U6Q4-2"/>
    <property type="protein sequence ID" value="ENSMUSP00000099673.2"/>
    <property type="gene ID" value="ENSMUSG00000046207.15"/>
</dbReference>
<dbReference type="GeneID" id="104709"/>
<dbReference type="KEGG" id="mmu:104709"/>
<dbReference type="UCSC" id="uc007jnq.1">
    <molecule id="Q3U6Q4-3"/>
    <property type="organism name" value="mouse"/>
</dbReference>
<dbReference type="UCSC" id="uc007jnr.2">
    <molecule id="Q3U6Q4-1"/>
    <property type="organism name" value="mouse"/>
</dbReference>
<dbReference type="UCSC" id="uc007jns.2">
    <molecule id="Q3U6Q4-2"/>
    <property type="organism name" value="mouse"/>
</dbReference>
<dbReference type="AGR" id="MGI:2144613"/>
<dbReference type="CTD" id="146850"/>
<dbReference type="MGI" id="MGI:2144613">
    <property type="gene designation" value="Pik3r6"/>
</dbReference>
<dbReference type="VEuPathDB" id="HostDB:ENSMUSG00000046207"/>
<dbReference type="eggNOG" id="ENOG502QSK4">
    <property type="taxonomic scope" value="Eukaryota"/>
</dbReference>
<dbReference type="GeneTree" id="ENSGT00530000063753"/>
<dbReference type="HOGENOM" id="CLU_023662_0_0_1"/>
<dbReference type="InParanoid" id="Q3U6Q4"/>
<dbReference type="OMA" id="MPACWDG"/>
<dbReference type="OrthoDB" id="8781591at2759"/>
<dbReference type="PhylomeDB" id="Q3U6Q4"/>
<dbReference type="TreeFam" id="TF102035"/>
<dbReference type="BRENDA" id="2.7.1.137">
    <property type="organism ID" value="3474"/>
</dbReference>
<dbReference type="Reactome" id="R-MMU-114604">
    <property type="pathway name" value="GPVI-mediated activation cascade"/>
</dbReference>
<dbReference type="Reactome" id="R-MMU-1257604">
    <property type="pathway name" value="PIP3 activates AKT signaling"/>
</dbReference>
<dbReference type="Reactome" id="R-MMU-1660499">
    <property type="pathway name" value="Synthesis of PIPs at the plasma membrane"/>
</dbReference>
<dbReference type="Reactome" id="R-MMU-389357">
    <property type="pathway name" value="CD28 dependent PI3K/Akt signaling"/>
</dbReference>
<dbReference type="Reactome" id="R-MMU-392451">
    <property type="pathway name" value="G beta:gamma signalling through PI3Kgamma"/>
</dbReference>
<dbReference type="Reactome" id="R-MMU-6811558">
    <property type="pathway name" value="PI5P, PP2A and IER3 Regulate PI3K/AKT Signaling"/>
</dbReference>
<dbReference type="Reactome" id="R-MMU-9927354">
    <property type="pathway name" value="Co-stimulation by ICOS"/>
</dbReference>
<dbReference type="BioGRID-ORCS" id="104709">
    <property type="hits" value="4 hits in 80 CRISPR screens"/>
</dbReference>
<dbReference type="PRO" id="PR:Q3U6Q4"/>
<dbReference type="Proteomes" id="UP000000589">
    <property type="component" value="Chromosome 11"/>
</dbReference>
<dbReference type="RNAct" id="Q3U6Q4">
    <property type="molecule type" value="protein"/>
</dbReference>
<dbReference type="Bgee" id="ENSMUSG00000046207">
    <property type="expression patterns" value="Expressed in granulocyte and 120 other cell types or tissues"/>
</dbReference>
<dbReference type="GO" id="GO:0005737">
    <property type="term" value="C:cytoplasm"/>
    <property type="evidence" value="ECO:0007669"/>
    <property type="project" value="UniProtKB-SubCell"/>
</dbReference>
<dbReference type="GO" id="GO:0016020">
    <property type="term" value="C:membrane"/>
    <property type="evidence" value="ECO:0000314"/>
    <property type="project" value="UniProtKB"/>
</dbReference>
<dbReference type="GO" id="GO:0005944">
    <property type="term" value="C:phosphatidylinositol 3-kinase complex, class IB"/>
    <property type="evidence" value="ECO:0000314"/>
    <property type="project" value="UniProtKB"/>
</dbReference>
<dbReference type="GO" id="GO:0005886">
    <property type="term" value="C:plasma membrane"/>
    <property type="evidence" value="ECO:0007669"/>
    <property type="project" value="UniProtKB-SubCell"/>
</dbReference>
<dbReference type="GO" id="GO:0046935">
    <property type="term" value="F:1-phosphatidylinositol-3-kinase regulator activity"/>
    <property type="evidence" value="ECO:0000314"/>
    <property type="project" value="UniProtKB"/>
</dbReference>
<dbReference type="GO" id="GO:0001525">
    <property type="term" value="P:angiogenesis"/>
    <property type="evidence" value="ECO:0007669"/>
    <property type="project" value="UniProtKB-KW"/>
</dbReference>
<dbReference type="GO" id="GO:0007186">
    <property type="term" value="P:G protein-coupled receptor signaling pathway"/>
    <property type="evidence" value="ECO:0000314"/>
    <property type="project" value="UniProtKB"/>
</dbReference>
<dbReference type="GO" id="GO:0045766">
    <property type="term" value="P:positive regulation of angiogenesis"/>
    <property type="evidence" value="ECO:0000250"/>
    <property type="project" value="UniProtKB"/>
</dbReference>
<dbReference type="GO" id="GO:0043406">
    <property type="term" value="P:positive regulation of MAP kinase activity"/>
    <property type="evidence" value="ECO:0000314"/>
    <property type="project" value="UniProtKB"/>
</dbReference>
<dbReference type="GO" id="GO:0045582">
    <property type="term" value="P:positive regulation of T cell differentiation"/>
    <property type="evidence" value="ECO:0000315"/>
    <property type="project" value="CACAO"/>
</dbReference>
<dbReference type="GO" id="GO:0042269">
    <property type="term" value="P:regulation of natural killer cell mediated cytotoxicity"/>
    <property type="evidence" value="ECO:0007669"/>
    <property type="project" value="Ensembl"/>
</dbReference>
<dbReference type="InterPro" id="IPR019522">
    <property type="entry name" value="PIK3R5/6"/>
</dbReference>
<dbReference type="PANTHER" id="PTHR15593">
    <property type="entry name" value="PHOSPHATIDYLINOSITOL 3-KINASE REGULATORY SUBUNIT"/>
    <property type="match status" value="1"/>
</dbReference>
<dbReference type="PANTHER" id="PTHR15593:SF1">
    <property type="entry name" value="PHOSPHOINOSITIDE 3-KINASE REGULATORY SUBUNIT 6"/>
    <property type="match status" value="1"/>
</dbReference>
<dbReference type="Pfam" id="PF10486">
    <property type="entry name" value="PI3K_1B_p101"/>
    <property type="match status" value="2"/>
</dbReference>
<name>PI3R6_MOUSE</name>
<protein>
    <recommendedName>
        <fullName>Phosphoinositide 3-kinase regulatory subunit 6</fullName>
    </recommendedName>
    <alternativeName>
        <fullName>Phosphoinositide 3-kinase gamma adapter protein of 87 kDa</fullName>
    </alternativeName>
    <alternativeName>
        <fullName>p84 PI3K adapter protein</fullName>
        <shortName>p84 PIKAP</shortName>
    </alternativeName>
    <alternativeName>
        <fullName>p87 PI3K adapter protein</fullName>
        <shortName>p87PIKAP</shortName>
    </alternativeName>
</protein>
<proteinExistence type="evidence at protein level"/>
<organism>
    <name type="scientific">Mus musculus</name>
    <name type="common">Mouse</name>
    <dbReference type="NCBI Taxonomy" id="10090"/>
    <lineage>
        <taxon>Eukaryota</taxon>
        <taxon>Metazoa</taxon>
        <taxon>Chordata</taxon>
        <taxon>Craniata</taxon>
        <taxon>Vertebrata</taxon>
        <taxon>Euteleostomi</taxon>
        <taxon>Mammalia</taxon>
        <taxon>Eutheria</taxon>
        <taxon>Euarchontoglires</taxon>
        <taxon>Glires</taxon>
        <taxon>Rodentia</taxon>
        <taxon>Myomorpha</taxon>
        <taxon>Muroidea</taxon>
        <taxon>Muridae</taxon>
        <taxon>Murinae</taxon>
        <taxon>Mus</taxon>
        <taxon>Mus</taxon>
    </lineage>
</organism>
<sequence>MESSDVELDFQRSVQAVLRELNTPNPALQSNQGMWRWSLHKKVERNPGKSSILVRILLRELEKAESEDGRRVIIPLLLTLMSVLTKATGIPEDLYHRAYTFCTRLLTLPAPYSTVALDCAIRLKTETAVPGTLYQRTVIAEQNLISELYPYQERVFLFVDPELVSASVCSALLLEIQAAQEQQTPEACMRHVVSHALQAALGEACHTGALNRKLQASSRRVLEYYFHAVVAAIEQVASEDSPSRLGHLEKMEEIYCSLLGPATTRRHCVGDLLQDRLPSIPLPSPYITFHLWTDQEQLWKELVLFLRPRSQLRLSADLDALDLQGFRLDRDLARVSTDSGIERDLPLGSDELPDPSSSEMERAALQRKGGIKKRVWPPDFFMPGSWDGPPGLHRRTGRPSGDGELLPGVSRVHTARVLVLGDDRMLGRLAQAYYRLRKRETKKFCLTPRLSLQLYYIPVLAPQVTGQDPEASRKPELGELASFLGRVDPWYESTVNTLCPAILKLAEMPPYLDTSRTVDPFILDVITYYVRMGTQPIYFQLYKVKIFTSLSHDPTEDIFLTELKVKIQDSKSPKEGSSPRRRGAAEGTGAELSMCYQKALLSHRPREVTVSLRATGLVLKAIPAGDTEVSGFFHCTSPNAASATDCSCLHVSVTEVVKSSNLAGRSFTTSTNTFRTSSIQVQSQDQRLLTLWLDKDGRRTFRDVVRFEVSPCPEPCSRTQKSKTSALNSHGQETEKNMAKPNSLLMPINTFSGIIQ</sequence>
<reference key="1">
    <citation type="journal article" date="2006" name="J. Biol. Chem.">
        <title>Characterization of p87PIKAP, a novel regulatory subunit of phosphoinositide 3-kinase gamma that is highly expressed in heart and interacts with PDE3B.</title>
        <authorList>
            <person name="Voigt P."/>
            <person name="Dorner M.B."/>
            <person name="Schaefer M."/>
        </authorList>
    </citation>
    <scope>NUCLEOTIDE SEQUENCE [MRNA] (ISOFORMS 1 AND 2)</scope>
    <scope>TISSUE SPECIFICITY</scope>
    <scope>INTERACTION WITH PDE3B AND PIK3CG</scope>
    <scope>SUBCELLULAR LOCATION</scope>
    <scope>FUNCTION</scope>
</reference>
<reference key="2">
    <citation type="journal article" date="2005" name="Science">
        <title>The transcriptional landscape of the mammalian genome.</title>
        <authorList>
            <person name="Carninci P."/>
            <person name="Kasukawa T."/>
            <person name="Katayama S."/>
            <person name="Gough J."/>
            <person name="Frith M.C."/>
            <person name="Maeda N."/>
            <person name="Oyama R."/>
            <person name="Ravasi T."/>
            <person name="Lenhard B."/>
            <person name="Wells C."/>
            <person name="Kodzius R."/>
            <person name="Shimokawa K."/>
            <person name="Bajic V.B."/>
            <person name="Brenner S.E."/>
            <person name="Batalov S."/>
            <person name="Forrest A.R."/>
            <person name="Zavolan M."/>
            <person name="Davis M.J."/>
            <person name="Wilming L.G."/>
            <person name="Aidinis V."/>
            <person name="Allen J.E."/>
            <person name="Ambesi-Impiombato A."/>
            <person name="Apweiler R."/>
            <person name="Aturaliya R.N."/>
            <person name="Bailey T.L."/>
            <person name="Bansal M."/>
            <person name="Baxter L."/>
            <person name="Beisel K.W."/>
            <person name="Bersano T."/>
            <person name="Bono H."/>
            <person name="Chalk A.M."/>
            <person name="Chiu K.P."/>
            <person name="Choudhary V."/>
            <person name="Christoffels A."/>
            <person name="Clutterbuck D.R."/>
            <person name="Crowe M.L."/>
            <person name="Dalla E."/>
            <person name="Dalrymple B.P."/>
            <person name="de Bono B."/>
            <person name="Della Gatta G."/>
            <person name="di Bernardo D."/>
            <person name="Down T."/>
            <person name="Engstrom P."/>
            <person name="Fagiolini M."/>
            <person name="Faulkner G."/>
            <person name="Fletcher C.F."/>
            <person name="Fukushima T."/>
            <person name="Furuno M."/>
            <person name="Futaki S."/>
            <person name="Gariboldi M."/>
            <person name="Georgii-Hemming P."/>
            <person name="Gingeras T.R."/>
            <person name="Gojobori T."/>
            <person name="Green R.E."/>
            <person name="Gustincich S."/>
            <person name="Harbers M."/>
            <person name="Hayashi Y."/>
            <person name="Hensch T.K."/>
            <person name="Hirokawa N."/>
            <person name="Hill D."/>
            <person name="Huminiecki L."/>
            <person name="Iacono M."/>
            <person name="Ikeo K."/>
            <person name="Iwama A."/>
            <person name="Ishikawa T."/>
            <person name="Jakt M."/>
            <person name="Kanapin A."/>
            <person name="Katoh M."/>
            <person name="Kawasawa Y."/>
            <person name="Kelso J."/>
            <person name="Kitamura H."/>
            <person name="Kitano H."/>
            <person name="Kollias G."/>
            <person name="Krishnan S.P."/>
            <person name="Kruger A."/>
            <person name="Kummerfeld S.K."/>
            <person name="Kurochkin I.V."/>
            <person name="Lareau L.F."/>
            <person name="Lazarevic D."/>
            <person name="Lipovich L."/>
            <person name="Liu J."/>
            <person name="Liuni S."/>
            <person name="McWilliam S."/>
            <person name="Madan Babu M."/>
            <person name="Madera M."/>
            <person name="Marchionni L."/>
            <person name="Matsuda H."/>
            <person name="Matsuzawa S."/>
            <person name="Miki H."/>
            <person name="Mignone F."/>
            <person name="Miyake S."/>
            <person name="Morris K."/>
            <person name="Mottagui-Tabar S."/>
            <person name="Mulder N."/>
            <person name="Nakano N."/>
            <person name="Nakauchi H."/>
            <person name="Ng P."/>
            <person name="Nilsson R."/>
            <person name="Nishiguchi S."/>
            <person name="Nishikawa S."/>
            <person name="Nori F."/>
            <person name="Ohara O."/>
            <person name="Okazaki Y."/>
            <person name="Orlando V."/>
            <person name="Pang K.C."/>
            <person name="Pavan W.J."/>
            <person name="Pavesi G."/>
            <person name="Pesole G."/>
            <person name="Petrovsky N."/>
            <person name="Piazza S."/>
            <person name="Reed J."/>
            <person name="Reid J.F."/>
            <person name="Ring B.Z."/>
            <person name="Ringwald M."/>
            <person name="Rost B."/>
            <person name="Ruan Y."/>
            <person name="Salzberg S.L."/>
            <person name="Sandelin A."/>
            <person name="Schneider C."/>
            <person name="Schoenbach C."/>
            <person name="Sekiguchi K."/>
            <person name="Semple C.A."/>
            <person name="Seno S."/>
            <person name="Sessa L."/>
            <person name="Sheng Y."/>
            <person name="Shibata Y."/>
            <person name="Shimada H."/>
            <person name="Shimada K."/>
            <person name="Silva D."/>
            <person name="Sinclair B."/>
            <person name="Sperling S."/>
            <person name="Stupka E."/>
            <person name="Sugiura K."/>
            <person name="Sultana R."/>
            <person name="Takenaka Y."/>
            <person name="Taki K."/>
            <person name="Tammoja K."/>
            <person name="Tan S.L."/>
            <person name="Tang S."/>
            <person name="Taylor M.S."/>
            <person name="Tegner J."/>
            <person name="Teichmann S.A."/>
            <person name="Ueda H.R."/>
            <person name="van Nimwegen E."/>
            <person name="Verardo R."/>
            <person name="Wei C.L."/>
            <person name="Yagi K."/>
            <person name="Yamanishi H."/>
            <person name="Zabarovsky E."/>
            <person name="Zhu S."/>
            <person name="Zimmer A."/>
            <person name="Hide W."/>
            <person name="Bult C."/>
            <person name="Grimmond S.M."/>
            <person name="Teasdale R.D."/>
            <person name="Liu E.T."/>
            <person name="Brusic V."/>
            <person name="Quackenbush J."/>
            <person name="Wahlestedt C."/>
            <person name="Mattick J.S."/>
            <person name="Hume D.A."/>
            <person name="Kai C."/>
            <person name="Sasaki D."/>
            <person name="Tomaru Y."/>
            <person name="Fukuda S."/>
            <person name="Kanamori-Katayama M."/>
            <person name="Suzuki M."/>
            <person name="Aoki J."/>
            <person name="Arakawa T."/>
            <person name="Iida J."/>
            <person name="Imamura K."/>
            <person name="Itoh M."/>
            <person name="Kato T."/>
            <person name="Kawaji H."/>
            <person name="Kawagashira N."/>
            <person name="Kawashima T."/>
            <person name="Kojima M."/>
            <person name="Kondo S."/>
            <person name="Konno H."/>
            <person name="Nakano K."/>
            <person name="Ninomiya N."/>
            <person name="Nishio T."/>
            <person name="Okada M."/>
            <person name="Plessy C."/>
            <person name="Shibata K."/>
            <person name="Shiraki T."/>
            <person name="Suzuki S."/>
            <person name="Tagami M."/>
            <person name="Waki K."/>
            <person name="Watahiki A."/>
            <person name="Okamura-Oho Y."/>
            <person name="Suzuki H."/>
            <person name="Kawai J."/>
            <person name="Hayashizaki Y."/>
        </authorList>
    </citation>
    <scope>NUCLEOTIDE SEQUENCE [LARGE SCALE MRNA] (ISOFORMS 1 AND 3)</scope>
    <source>
        <strain>C57BL/6J</strain>
        <strain>NOD</strain>
        <tissue>Bone marrow</tissue>
    </source>
</reference>
<reference key="3">
    <citation type="journal article" date="2009" name="PLoS Biol.">
        <title>Lineage-specific biology revealed by a finished genome assembly of the mouse.</title>
        <authorList>
            <person name="Church D.M."/>
            <person name="Goodstadt L."/>
            <person name="Hillier L.W."/>
            <person name="Zody M.C."/>
            <person name="Goldstein S."/>
            <person name="She X."/>
            <person name="Bult C.J."/>
            <person name="Agarwala R."/>
            <person name="Cherry J.L."/>
            <person name="DiCuccio M."/>
            <person name="Hlavina W."/>
            <person name="Kapustin Y."/>
            <person name="Meric P."/>
            <person name="Maglott D."/>
            <person name="Birtle Z."/>
            <person name="Marques A.C."/>
            <person name="Graves T."/>
            <person name="Zhou S."/>
            <person name="Teague B."/>
            <person name="Potamousis K."/>
            <person name="Churas C."/>
            <person name="Place M."/>
            <person name="Herschleb J."/>
            <person name="Runnheim R."/>
            <person name="Forrest D."/>
            <person name="Amos-Landgraf J."/>
            <person name="Schwartz D.C."/>
            <person name="Cheng Z."/>
            <person name="Lindblad-Toh K."/>
            <person name="Eichler E.E."/>
            <person name="Ponting C.P."/>
        </authorList>
    </citation>
    <scope>NUCLEOTIDE SEQUENCE [LARGE SCALE GENOMIC DNA]</scope>
    <source>
        <strain>C57BL/6J</strain>
    </source>
</reference>
<reference key="4">
    <citation type="journal article" date="2004" name="Genome Res.">
        <title>The status, quality, and expansion of the NIH full-length cDNA project: the Mammalian Gene Collection (MGC).</title>
        <authorList>
            <consortium name="The MGC Project Team"/>
        </authorList>
    </citation>
    <scope>NUCLEOTIDE SEQUENCE [LARGE SCALE MRNA] (ISOFORM 2)</scope>
    <source>
        <strain>FVB/N</strain>
        <tissue>Mammary gland</tissue>
    </source>
</reference>
<reference key="5">
    <citation type="journal article" date="2005" name="Curr. Biol.">
        <title>p84, a new Gbetagamma-activated regulatory subunit of the type IB phosphoinositide 3-kinase p110gamma.</title>
        <authorList>
            <person name="Suire S."/>
            <person name="Coadwell J."/>
            <person name="Ferguson G.J."/>
            <person name="Davidson K."/>
            <person name="Hawkins P."/>
            <person name="Stephens L."/>
        </authorList>
    </citation>
    <scope>INTERACTION WITH PIK3CG</scope>
    <scope>FUNCTION</scope>
</reference>
<reference key="6">
    <citation type="journal article" date="2009" name="Proc. Natl. Acad. Sci. U.S.A.">
        <title>Ras is an indispensable coregulator of the class IB phosphoinositide 3-kinase p87/p110gamma.</title>
        <authorList>
            <person name="Kurig B."/>
            <person name="Shymanets A."/>
            <person name="Bohnacker T."/>
            <person name="Prajwal X."/>
            <person name="Brock C."/>
            <person name="Ahmadian M.R."/>
            <person name="Schaefer M."/>
            <person name="Gohla A."/>
            <person name="Harteneck C."/>
            <person name="Wymann M.P."/>
            <person name="Jeanclos E."/>
            <person name="Nurnberg B."/>
        </authorList>
    </citation>
    <scope>FUNCTION</scope>
    <scope>SUBCELLULAR LOCATION</scope>
</reference>
<evidence type="ECO:0000250" key="1">
    <source>
        <dbReference type="UniProtKB" id="Q5UE93"/>
    </source>
</evidence>
<evidence type="ECO:0000256" key="2">
    <source>
        <dbReference type="SAM" id="MobiDB-lite"/>
    </source>
</evidence>
<evidence type="ECO:0000269" key="3">
    <source>
    </source>
</evidence>
<evidence type="ECO:0000269" key="4">
    <source>
    </source>
</evidence>
<evidence type="ECO:0000269" key="5">
    <source>
    </source>
</evidence>
<evidence type="ECO:0000303" key="6">
    <source>
    </source>
</evidence>
<evidence type="ECO:0000303" key="7">
    <source>
    </source>
</evidence>
<evidence type="ECO:0000303" key="8">
    <source>
    </source>
</evidence>
<evidence type="ECO:0000305" key="9"/>
<feature type="chain" id="PRO_0000234339" description="Phosphoinositide 3-kinase regulatory subunit 6">
    <location>
        <begin position="1"/>
        <end position="756"/>
    </location>
</feature>
<feature type="region of interest" description="Disordered" evidence="2">
    <location>
        <begin position="570"/>
        <end position="589"/>
    </location>
</feature>
<feature type="region of interest" description="Disordered" evidence="2">
    <location>
        <begin position="716"/>
        <end position="738"/>
    </location>
</feature>
<feature type="compositionally biased region" description="Polar residues" evidence="2">
    <location>
        <begin position="717"/>
        <end position="731"/>
    </location>
</feature>
<feature type="splice variant" id="VSP_018255" description="In isoform 3." evidence="7">
    <original>DLLQDRLPSIPLPSPYITFHLWTDQEQLWKELVLF</original>
    <variation>KRGPAGDLPRETAIRRGGRQRARLDRMRFPEEPED</variation>
    <location>
        <begin position="271"/>
        <end position="305"/>
    </location>
</feature>
<feature type="splice variant" id="VSP_018256" description="In isoform 3." evidence="7">
    <location>
        <begin position="306"/>
        <end position="756"/>
    </location>
</feature>
<feature type="splice variant" id="VSP_018257" description="In isoform 2." evidence="6 8">
    <location>
        <begin position="463"/>
        <end position="466"/>
    </location>
</feature>
<feature type="sequence conflict" description="In Ref. 2; BAE30180." evidence="9" ref="2">
    <original>S</original>
    <variation>G</variation>
    <location>
        <position position="710"/>
    </location>
</feature>
<keyword id="KW-0002">3D-structure</keyword>
<keyword id="KW-0025">Alternative splicing</keyword>
<keyword id="KW-0037">Angiogenesis</keyword>
<keyword id="KW-1003">Cell membrane</keyword>
<keyword id="KW-0963">Cytoplasm</keyword>
<keyword id="KW-0472">Membrane</keyword>
<keyword id="KW-1185">Reference proteome</keyword>
<gene>
    <name type="primary">Pik3r6</name>
</gene>